<reference key="1">
    <citation type="journal article" date="2011" name="BMC Genomics">
        <title>Complete genome sequence of the filamentous anoxygenic phototrophic bacterium Chloroflexus aurantiacus.</title>
        <authorList>
            <person name="Tang K.H."/>
            <person name="Barry K."/>
            <person name="Chertkov O."/>
            <person name="Dalin E."/>
            <person name="Han C.S."/>
            <person name="Hauser L.J."/>
            <person name="Honchak B.M."/>
            <person name="Karbach L.E."/>
            <person name="Land M.L."/>
            <person name="Lapidus A."/>
            <person name="Larimer F.W."/>
            <person name="Mikhailova N."/>
            <person name="Pitluck S."/>
            <person name="Pierson B.K."/>
            <person name="Blankenship R.E."/>
        </authorList>
    </citation>
    <scope>NUCLEOTIDE SEQUENCE [LARGE SCALE GENOMIC DNA]</scope>
    <source>
        <strain>ATCC 29366 / DSM 635 / J-10-fl</strain>
    </source>
</reference>
<organism>
    <name type="scientific">Chloroflexus aurantiacus (strain ATCC 29366 / DSM 635 / J-10-fl)</name>
    <dbReference type="NCBI Taxonomy" id="324602"/>
    <lineage>
        <taxon>Bacteria</taxon>
        <taxon>Bacillati</taxon>
        <taxon>Chloroflexota</taxon>
        <taxon>Chloroflexia</taxon>
        <taxon>Chloroflexales</taxon>
        <taxon>Chloroflexineae</taxon>
        <taxon>Chloroflexaceae</taxon>
        <taxon>Chloroflexus</taxon>
    </lineage>
</organism>
<gene>
    <name type="ordered locus">Caur_3603</name>
</gene>
<name>Y3603_CHLAA</name>
<dbReference type="EMBL" id="CP000909">
    <property type="protein sequence ID" value="ABY36787.1"/>
    <property type="molecule type" value="Genomic_DNA"/>
</dbReference>
<dbReference type="RefSeq" id="YP_001637176.1">
    <property type="nucleotide sequence ID" value="NC_010175.1"/>
</dbReference>
<dbReference type="SMR" id="A9WAJ7"/>
<dbReference type="FunCoup" id="A9WAJ7">
    <property type="interactions" value="215"/>
</dbReference>
<dbReference type="STRING" id="324602.Caur_3603"/>
<dbReference type="EnsemblBacteria" id="ABY36787">
    <property type="protein sequence ID" value="ABY36787"/>
    <property type="gene ID" value="Caur_3603"/>
</dbReference>
<dbReference type="KEGG" id="cau:Caur_3603"/>
<dbReference type="PATRIC" id="fig|324602.8.peg.4056"/>
<dbReference type="eggNOG" id="COG2003">
    <property type="taxonomic scope" value="Bacteria"/>
</dbReference>
<dbReference type="HOGENOM" id="CLU_073529_0_2_0"/>
<dbReference type="InParanoid" id="A9WAJ7"/>
<dbReference type="Proteomes" id="UP000002008">
    <property type="component" value="Chromosome"/>
</dbReference>
<dbReference type="GO" id="GO:0046872">
    <property type="term" value="F:metal ion binding"/>
    <property type="evidence" value="ECO:0007669"/>
    <property type="project" value="UniProtKB-KW"/>
</dbReference>
<dbReference type="GO" id="GO:0008237">
    <property type="term" value="F:metallopeptidase activity"/>
    <property type="evidence" value="ECO:0007669"/>
    <property type="project" value="UniProtKB-KW"/>
</dbReference>
<dbReference type="GO" id="GO:0006508">
    <property type="term" value="P:proteolysis"/>
    <property type="evidence" value="ECO:0007669"/>
    <property type="project" value="UniProtKB-KW"/>
</dbReference>
<dbReference type="CDD" id="cd08071">
    <property type="entry name" value="MPN_DUF2466"/>
    <property type="match status" value="1"/>
</dbReference>
<dbReference type="Gene3D" id="3.40.140.10">
    <property type="entry name" value="Cytidine Deaminase, domain 2"/>
    <property type="match status" value="1"/>
</dbReference>
<dbReference type="InterPro" id="IPR037518">
    <property type="entry name" value="MPN"/>
</dbReference>
<dbReference type="InterPro" id="IPR025657">
    <property type="entry name" value="RadC_JAB"/>
</dbReference>
<dbReference type="InterPro" id="IPR010994">
    <property type="entry name" value="RuvA_2-like"/>
</dbReference>
<dbReference type="InterPro" id="IPR001405">
    <property type="entry name" value="UPF0758"/>
</dbReference>
<dbReference type="InterPro" id="IPR020891">
    <property type="entry name" value="UPF0758_CS"/>
</dbReference>
<dbReference type="InterPro" id="IPR046778">
    <property type="entry name" value="UPF0758_N"/>
</dbReference>
<dbReference type="NCBIfam" id="NF000642">
    <property type="entry name" value="PRK00024.1"/>
    <property type="match status" value="1"/>
</dbReference>
<dbReference type="NCBIfam" id="TIGR00608">
    <property type="entry name" value="radc"/>
    <property type="match status" value="1"/>
</dbReference>
<dbReference type="PANTHER" id="PTHR30471">
    <property type="entry name" value="DNA REPAIR PROTEIN RADC"/>
    <property type="match status" value="1"/>
</dbReference>
<dbReference type="PANTHER" id="PTHR30471:SF3">
    <property type="entry name" value="UPF0758 PROTEIN YEES-RELATED"/>
    <property type="match status" value="1"/>
</dbReference>
<dbReference type="Pfam" id="PF04002">
    <property type="entry name" value="RadC"/>
    <property type="match status" value="1"/>
</dbReference>
<dbReference type="Pfam" id="PF20582">
    <property type="entry name" value="UPF0758_N"/>
    <property type="match status" value="1"/>
</dbReference>
<dbReference type="SUPFAM" id="SSF102712">
    <property type="entry name" value="JAB1/MPN domain"/>
    <property type="match status" value="1"/>
</dbReference>
<dbReference type="SUPFAM" id="SSF47781">
    <property type="entry name" value="RuvA domain 2-like"/>
    <property type="match status" value="1"/>
</dbReference>
<dbReference type="PROSITE" id="PS50249">
    <property type="entry name" value="MPN"/>
    <property type="match status" value="1"/>
</dbReference>
<dbReference type="PROSITE" id="PS01302">
    <property type="entry name" value="UPF0758"/>
    <property type="match status" value="1"/>
</dbReference>
<feature type="chain" id="PRO_1000074140" description="UPF0758 protein Caur_3603">
    <location>
        <begin position="1"/>
        <end position="229"/>
    </location>
</feature>
<feature type="domain" description="MPN" evidence="1">
    <location>
        <begin position="105"/>
        <end position="227"/>
    </location>
</feature>
<feature type="short sequence motif" description="JAMM motif" evidence="1">
    <location>
        <begin position="176"/>
        <end position="189"/>
    </location>
</feature>
<feature type="binding site" evidence="1">
    <location>
        <position position="176"/>
    </location>
    <ligand>
        <name>Zn(2+)</name>
        <dbReference type="ChEBI" id="CHEBI:29105"/>
        <note>catalytic</note>
    </ligand>
</feature>
<feature type="binding site" evidence="1">
    <location>
        <position position="178"/>
    </location>
    <ligand>
        <name>Zn(2+)</name>
        <dbReference type="ChEBI" id="CHEBI:29105"/>
        <note>catalytic</note>
    </ligand>
</feature>
<feature type="binding site" evidence="1">
    <location>
        <position position="189"/>
    </location>
    <ligand>
        <name>Zn(2+)</name>
        <dbReference type="ChEBI" id="CHEBI:29105"/>
        <note>catalytic</note>
    </ligand>
</feature>
<comment type="similarity">
    <text evidence="2">Belongs to the UPF0758 family.</text>
</comment>
<keyword id="KW-0378">Hydrolase</keyword>
<keyword id="KW-0479">Metal-binding</keyword>
<keyword id="KW-0482">Metalloprotease</keyword>
<keyword id="KW-0645">Protease</keyword>
<keyword id="KW-1185">Reference proteome</keyword>
<keyword id="KW-0862">Zinc</keyword>
<protein>
    <recommendedName>
        <fullName>UPF0758 protein Caur_3603</fullName>
    </recommendedName>
</protein>
<accession>A9WAJ7</accession>
<proteinExistence type="inferred from homology"/>
<evidence type="ECO:0000255" key="1">
    <source>
        <dbReference type="PROSITE-ProRule" id="PRU01182"/>
    </source>
</evidence>
<evidence type="ECO:0000305" key="2"/>
<sequence length="229" mass="25219">MISLRIHEQPIHDQPRERLARQGAGALSDAELLAILLRVGTNGTNVLQLAQQLLAESGGLQGLQRLDFQELCRLHGMGVSKAASVKAALEIGRRLARSAIEERFPIRSPADVATLLLVEMSHLDQEHLRTILLDTKNRVQQITTVYIGSLNSANVRVGEVFKEAVRRNSAAIIVVHNHPSGEPTPSMEDIEITRQLVSAGRLLDIEVVDHLIIGNGRYVSLRERGLGFE</sequence>